<organism>
    <name type="scientific">Bacillus cereus (strain ATCC 14579 / DSM 31 / CCUG 7414 / JCM 2152 / NBRC 15305 / NCIMB 9373 / NCTC 2599 / NRRL B-3711)</name>
    <dbReference type="NCBI Taxonomy" id="226900"/>
    <lineage>
        <taxon>Bacteria</taxon>
        <taxon>Bacillati</taxon>
        <taxon>Bacillota</taxon>
        <taxon>Bacilli</taxon>
        <taxon>Bacillales</taxon>
        <taxon>Bacillaceae</taxon>
        <taxon>Bacillus</taxon>
        <taxon>Bacillus cereus group</taxon>
    </lineage>
</organism>
<gene>
    <name evidence="1" type="primary">mnmG</name>
    <name evidence="1" type="synonym">gidA</name>
    <name type="ordered locus">BC_5485</name>
</gene>
<protein>
    <recommendedName>
        <fullName evidence="1">tRNA uridine 5-carboxymethylaminomethyl modification enzyme MnmG</fullName>
    </recommendedName>
    <alternativeName>
        <fullName evidence="1">Glucose-inhibited division protein A</fullName>
    </alternativeName>
</protein>
<name>MNMG_BACCR</name>
<sequence>MGYNIGSYDVIVIGAGHAGCEAGLAAARMGSKTLMLTINLDMVAFMPCNPSVGGPAKGIVVREIDALGGEMGRNIDKTHIQMRMLNTGKGPAVRALRAQADKFAYQHELKKTIEETPNLTLFQGMVERLIVEEGVCKGVVTQAGAEYTAKTVVITTGTFLRGEIIMGDLKYSSGPNNQQPSITLSEHLEELGFDLVRFKTGTPPRVNSNTIDYSKTEIQPGDDKPRAFSFETTKFIMDQIPCWLTYTSTETHRLIDENLHRSAMYSGMIKGTGPRYCPSIEDKVVRFNDKPRHQIFLEPEGRNTQEVYVQGLSTSLPEDVQRDMLRTIPGLENVEMMRTGYAIEYDAIVPTQLWPTLETKKIKNLYTAGQINGTSGYEEAAGQGLMAGINAACRSLGKKEVVLGREDAYIGVLIDDLVTKGTNEPYRLLTSRAEYRLLLRHDNADLRLTEVGREIGLIKEERYERFTNKKLQIEQEKERLSSIIIKPRPEVQELIRNIGGSELKDGIRASDLLRRPEMAYEHIHLLVPSEVELSDEVKEQVEIQIKYEGYIEKSLQQVERMKKMESKKIPVDIDYDAISSLASEARQKLKDVRPLSMGQASRISGVNPADISILLVYIEQGKIARVSNQ</sequence>
<reference key="1">
    <citation type="journal article" date="2003" name="Nature">
        <title>Genome sequence of Bacillus cereus and comparative analysis with Bacillus anthracis.</title>
        <authorList>
            <person name="Ivanova N."/>
            <person name="Sorokin A."/>
            <person name="Anderson I."/>
            <person name="Galleron N."/>
            <person name="Candelon B."/>
            <person name="Kapatral V."/>
            <person name="Bhattacharyya A."/>
            <person name="Reznik G."/>
            <person name="Mikhailova N."/>
            <person name="Lapidus A."/>
            <person name="Chu L."/>
            <person name="Mazur M."/>
            <person name="Goltsman E."/>
            <person name="Larsen N."/>
            <person name="D'Souza M."/>
            <person name="Walunas T."/>
            <person name="Grechkin Y."/>
            <person name="Pusch G."/>
            <person name="Haselkorn R."/>
            <person name="Fonstein M."/>
            <person name="Ehrlich S.D."/>
            <person name="Overbeek R."/>
            <person name="Kyrpides N.C."/>
        </authorList>
    </citation>
    <scope>NUCLEOTIDE SEQUENCE [LARGE SCALE GENOMIC DNA]</scope>
    <source>
        <strain>ATCC 14579 / DSM 31 / CCUG 7414 / JCM 2152 / NBRC 15305 / NCIMB 9373 / NCTC 2599 / NRRL B-3711</strain>
    </source>
</reference>
<comment type="function">
    <text evidence="1">NAD-binding protein involved in the addition of a carboxymethylaminomethyl (cmnm) group at the wobble position (U34) of certain tRNAs, forming tRNA-cmnm(5)s(2)U34.</text>
</comment>
<comment type="cofactor">
    <cofactor evidence="1">
        <name>FAD</name>
        <dbReference type="ChEBI" id="CHEBI:57692"/>
    </cofactor>
</comment>
<comment type="subunit">
    <text evidence="1">Homodimer. Heterotetramer of two MnmE and two MnmG subunits.</text>
</comment>
<comment type="subcellular location">
    <subcellularLocation>
        <location evidence="1">Cytoplasm</location>
    </subcellularLocation>
</comment>
<comment type="similarity">
    <text evidence="1">Belongs to the MnmG family.</text>
</comment>
<keyword id="KW-0963">Cytoplasm</keyword>
<keyword id="KW-0274">FAD</keyword>
<keyword id="KW-0285">Flavoprotein</keyword>
<keyword id="KW-0520">NAD</keyword>
<keyword id="KW-1185">Reference proteome</keyword>
<keyword id="KW-0819">tRNA processing</keyword>
<accession>Q814F7</accession>
<proteinExistence type="inferred from homology"/>
<dbReference type="EMBL" id="AE016877">
    <property type="protein sequence ID" value="AAP12339.1"/>
    <property type="molecule type" value="Genomic_DNA"/>
</dbReference>
<dbReference type="RefSeq" id="NP_835138.1">
    <property type="nucleotide sequence ID" value="NC_004722.1"/>
</dbReference>
<dbReference type="RefSeq" id="WP_000541063.1">
    <property type="nucleotide sequence ID" value="NC_004722.1"/>
</dbReference>
<dbReference type="SMR" id="Q814F7"/>
<dbReference type="STRING" id="226900.BC_5485"/>
<dbReference type="KEGG" id="bce:BC5485"/>
<dbReference type="PATRIC" id="fig|226900.8.peg.5663"/>
<dbReference type="HOGENOM" id="CLU_007831_2_2_9"/>
<dbReference type="Proteomes" id="UP000001417">
    <property type="component" value="Chromosome"/>
</dbReference>
<dbReference type="GO" id="GO:0005829">
    <property type="term" value="C:cytosol"/>
    <property type="evidence" value="ECO:0000318"/>
    <property type="project" value="GO_Central"/>
</dbReference>
<dbReference type="GO" id="GO:0050660">
    <property type="term" value="F:flavin adenine dinucleotide binding"/>
    <property type="evidence" value="ECO:0000318"/>
    <property type="project" value="GO_Central"/>
</dbReference>
<dbReference type="GO" id="GO:0030488">
    <property type="term" value="P:tRNA methylation"/>
    <property type="evidence" value="ECO:0000318"/>
    <property type="project" value="GO_Central"/>
</dbReference>
<dbReference type="GO" id="GO:0002098">
    <property type="term" value="P:tRNA wobble uridine modification"/>
    <property type="evidence" value="ECO:0000318"/>
    <property type="project" value="GO_Central"/>
</dbReference>
<dbReference type="FunFam" id="1.10.10.1800:FF:000001">
    <property type="entry name" value="tRNA uridine 5-carboxymethylaminomethyl modification enzyme MnmG"/>
    <property type="match status" value="1"/>
</dbReference>
<dbReference type="FunFam" id="1.10.150.570:FF:000001">
    <property type="entry name" value="tRNA uridine 5-carboxymethylaminomethyl modification enzyme MnmG"/>
    <property type="match status" value="1"/>
</dbReference>
<dbReference type="FunFam" id="3.50.50.60:FF:000002">
    <property type="entry name" value="tRNA uridine 5-carboxymethylaminomethyl modification enzyme MnmG"/>
    <property type="match status" value="1"/>
</dbReference>
<dbReference type="FunFam" id="3.50.50.60:FF:000063">
    <property type="entry name" value="tRNA uridine 5-carboxymethylaminomethyl modification enzyme MnmG"/>
    <property type="match status" value="1"/>
</dbReference>
<dbReference type="Gene3D" id="3.50.50.60">
    <property type="entry name" value="FAD/NAD(P)-binding domain"/>
    <property type="match status" value="2"/>
</dbReference>
<dbReference type="Gene3D" id="1.10.150.570">
    <property type="entry name" value="GidA associated domain, C-terminal subdomain"/>
    <property type="match status" value="1"/>
</dbReference>
<dbReference type="Gene3D" id="1.10.10.1800">
    <property type="entry name" value="tRNA uridine 5-carboxymethylaminomethyl modification enzyme MnmG/GidA"/>
    <property type="match status" value="1"/>
</dbReference>
<dbReference type="HAMAP" id="MF_00129">
    <property type="entry name" value="MnmG_GidA"/>
    <property type="match status" value="1"/>
</dbReference>
<dbReference type="InterPro" id="IPR036188">
    <property type="entry name" value="FAD/NAD-bd_sf"/>
</dbReference>
<dbReference type="InterPro" id="IPR049312">
    <property type="entry name" value="GIDA_C_N"/>
</dbReference>
<dbReference type="InterPro" id="IPR004416">
    <property type="entry name" value="MnmG"/>
</dbReference>
<dbReference type="InterPro" id="IPR002218">
    <property type="entry name" value="MnmG-rel"/>
</dbReference>
<dbReference type="InterPro" id="IPR020595">
    <property type="entry name" value="MnmG-rel_CS"/>
</dbReference>
<dbReference type="InterPro" id="IPR026904">
    <property type="entry name" value="MnmG_C"/>
</dbReference>
<dbReference type="InterPro" id="IPR047001">
    <property type="entry name" value="MnmG_C_subdom"/>
</dbReference>
<dbReference type="InterPro" id="IPR044920">
    <property type="entry name" value="MnmG_C_subdom_sf"/>
</dbReference>
<dbReference type="InterPro" id="IPR040131">
    <property type="entry name" value="MnmG_N"/>
</dbReference>
<dbReference type="NCBIfam" id="TIGR00136">
    <property type="entry name" value="mnmG_gidA"/>
    <property type="match status" value="1"/>
</dbReference>
<dbReference type="PANTHER" id="PTHR11806">
    <property type="entry name" value="GLUCOSE INHIBITED DIVISION PROTEIN A"/>
    <property type="match status" value="1"/>
</dbReference>
<dbReference type="PANTHER" id="PTHR11806:SF0">
    <property type="entry name" value="PROTEIN MTO1 HOMOLOG, MITOCHONDRIAL"/>
    <property type="match status" value="1"/>
</dbReference>
<dbReference type="Pfam" id="PF01134">
    <property type="entry name" value="GIDA"/>
    <property type="match status" value="1"/>
</dbReference>
<dbReference type="Pfam" id="PF21680">
    <property type="entry name" value="GIDA_C_1st"/>
    <property type="match status" value="1"/>
</dbReference>
<dbReference type="Pfam" id="PF13932">
    <property type="entry name" value="SAM_GIDA_C"/>
    <property type="match status" value="1"/>
</dbReference>
<dbReference type="PRINTS" id="PR00411">
    <property type="entry name" value="PNDRDTASEI"/>
</dbReference>
<dbReference type="SMART" id="SM01228">
    <property type="entry name" value="GIDA_assoc_3"/>
    <property type="match status" value="1"/>
</dbReference>
<dbReference type="SUPFAM" id="SSF51905">
    <property type="entry name" value="FAD/NAD(P)-binding domain"/>
    <property type="match status" value="1"/>
</dbReference>
<dbReference type="PROSITE" id="PS01280">
    <property type="entry name" value="GIDA_1"/>
    <property type="match status" value="1"/>
</dbReference>
<dbReference type="PROSITE" id="PS01281">
    <property type="entry name" value="GIDA_2"/>
    <property type="match status" value="1"/>
</dbReference>
<evidence type="ECO:0000255" key="1">
    <source>
        <dbReference type="HAMAP-Rule" id="MF_00129"/>
    </source>
</evidence>
<feature type="chain" id="PRO_0000117050" description="tRNA uridine 5-carboxymethylaminomethyl modification enzyme MnmG">
    <location>
        <begin position="1"/>
        <end position="629"/>
    </location>
</feature>
<feature type="binding site" evidence="1">
    <location>
        <begin position="14"/>
        <end position="19"/>
    </location>
    <ligand>
        <name>FAD</name>
        <dbReference type="ChEBI" id="CHEBI:57692"/>
    </ligand>
</feature>
<feature type="binding site" evidence="1">
    <location>
        <position position="126"/>
    </location>
    <ligand>
        <name>FAD</name>
        <dbReference type="ChEBI" id="CHEBI:57692"/>
    </ligand>
</feature>
<feature type="binding site" evidence="1">
    <location>
        <position position="181"/>
    </location>
    <ligand>
        <name>FAD</name>
        <dbReference type="ChEBI" id="CHEBI:57692"/>
    </ligand>
</feature>
<feature type="binding site" evidence="1">
    <location>
        <begin position="273"/>
        <end position="287"/>
    </location>
    <ligand>
        <name>NAD(+)</name>
        <dbReference type="ChEBI" id="CHEBI:57540"/>
    </ligand>
</feature>
<feature type="binding site" evidence="1">
    <location>
        <position position="370"/>
    </location>
    <ligand>
        <name>FAD</name>
        <dbReference type="ChEBI" id="CHEBI:57692"/>
    </ligand>
</feature>